<comment type="function">
    <text evidence="1">Involved in cytoplasm to vacuole transport (Cvt) and autophagic vesicle formation. Autophagy is essential for maintenance of amino acid levels and protein synthesis under nitrogen starvation. Required for selective autophagic degradation of the nucleus (nucleophagy). Also required for mitophagy, which eliminates defective or superfluous mitochondria in order to fulfill cellular energy requirements and prevent excess ROS production. Conjugation with ATG12, through a ubiquitin-like conjugating system involving ATG7 as an E1-like activating enzyme and ATG10 as an E2-like conjugating enzyme, is essential for its function. The ATG12-ATG5 conjugate acts as an E3-like enzyme which is required for lipidation of ATG8 and ATG8 association to the vesicle membranes (By similarity).</text>
</comment>
<comment type="subunit">
    <text evidence="1">Conjugated with ATG12.</text>
</comment>
<comment type="subcellular location">
    <subcellularLocation>
        <location evidence="1">Preautophagosomal structure membrane</location>
        <topology evidence="1">Peripheral membrane protein</topology>
    </subcellularLocation>
</comment>
<comment type="PTM">
    <text evidence="1">Conjugated to ATG12; which is essential for autophagy.</text>
</comment>
<comment type="similarity">
    <text evidence="2">Belongs to the ATG5 family.</text>
</comment>
<protein>
    <recommendedName>
        <fullName>Autophagy protein 5</fullName>
    </recommendedName>
</protein>
<name>ATG5_PICST</name>
<dbReference type="EMBL" id="CP000497">
    <property type="protein sequence ID" value="ABN65685.2"/>
    <property type="molecule type" value="Genomic_DNA"/>
</dbReference>
<dbReference type="RefSeq" id="XP_001383714.2">
    <property type="nucleotide sequence ID" value="XM_001383677.1"/>
</dbReference>
<dbReference type="SMR" id="A3LR68"/>
<dbReference type="FunCoup" id="A3LR68">
    <property type="interactions" value="356"/>
</dbReference>
<dbReference type="STRING" id="322104.A3LR68"/>
<dbReference type="GeneID" id="4837983"/>
<dbReference type="KEGG" id="pic:PICST_35437"/>
<dbReference type="eggNOG" id="KOG2976">
    <property type="taxonomic scope" value="Eukaryota"/>
</dbReference>
<dbReference type="HOGENOM" id="CLU_051894_2_0_1"/>
<dbReference type="InParanoid" id="A3LR68"/>
<dbReference type="OMA" id="SIQKAVW"/>
<dbReference type="OrthoDB" id="272162at2759"/>
<dbReference type="Proteomes" id="UP000002258">
    <property type="component" value="Chromosome 3"/>
</dbReference>
<dbReference type="GO" id="GO:0034274">
    <property type="term" value="C:Atg12-Atg5-Atg16 complex"/>
    <property type="evidence" value="ECO:0007669"/>
    <property type="project" value="TreeGrafter"/>
</dbReference>
<dbReference type="GO" id="GO:0005776">
    <property type="term" value="C:autophagosome"/>
    <property type="evidence" value="ECO:0007669"/>
    <property type="project" value="TreeGrafter"/>
</dbReference>
<dbReference type="GO" id="GO:0044233">
    <property type="term" value="C:mitochondria-associated endoplasmic reticulum membrane contact site"/>
    <property type="evidence" value="ECO:0007669"/>
    <property type="project" value="TreeGrafter"/>
</dbReference>
<dbReference type="GO" id="GO:0061908">
    <property type="term" value="C:phagophore"/>
    <property type="evidence" value="ECO:0007669"/>
    <property type="project" value="TreeGrafter"/>
</dbReference>
<dbReference type="GO" id="GO:0034045">
    <property type="term" value="C:phagophore assembly site membrane"/>
    <property type="evidence" value="ECO:0007669"/>
    <property type="project" value="UniProtKB-SubCell"/>
</dbReference>
<dbReference type="GO" id="GO:0019776">
    <property type="term" value="F:Atg8-family ligase activity"/>
    <property type="evidence" value="ECO:0007669"/>
    <property type="project" value="TreeGrafter"/>
</dbReference>
<dbReference type="GO" id="GO:0000422">
    <property type="term" value="P:autophagy of mitochondrion"/>
    <property type="evidence" value="ECO:0007669"/>
    <property type="project" value="TreeGrafter"/>
</dbReference>
<dbReference type="GO" id="GO:0006995">
    <property type="term" value="P:cellular response to nitrogen starvation"/>
    <property type="evidence" value="ECO:0007669"/>
    <property type="project" value="TreeGrafter"/>
</dbReference>
<dbReference type="GO" id="GO:0034727">
    <property type="term" value="P:piecemeal microautophagy of the nucleus"/>
    <property type="evidence" value="ECO:0007669"/>
    <property type="project" value="TreeGrafter"/>
</dbReference>
<dbReference type="GO" id="GO:0015031">
    <property type="term" value="P:protein transport"/>
    <property type="evidence" value="ECO:0007669"/>
    <property type="project" value="UniProtKB-KW"/>
</dbReference>
<dbReference type="Gene3D" id="3.10.20.620">
    <property type="match status" value="1"/>
</dbReference>
<dbReference type="Gene3D" id="1.10.246.190">
    <property type="entry name" value="Autophagy protein Apg5, helix rich domain"/>
    <property type="match status" value="1"/>
</dbReference>
<dbReference type="Gene3D" id="3.10.20.90">
    <property type="entry name" value="Phosphatidylinositol 3-kinase Catalytic Subunit, Chain A, domain 1"/>
    <property type="match status" value="1"/>
</dbReference>
<dbReference type="InterPro" id="IPR007239">
    <property type="entry name" value="Atg5"/>
</dbReference>
<dbReference type="InterPro" id="IPR048940">
    <property type="entry name" value="ATG5_HBR"/>
</dbReference>
<dbReference type="InterPro" id="IPR042526">
    <property type="entry name" value="Atg5_HR"/>
</dbReference>
<dbReference type="InterPro" id="IPR048939">
    <property type="entry name" value="ATG5_UblA"/>
</dbReference>
<dbReference type="InterPro" id="IPR042527">
    <property type="entry name" value="Atg5_UblA_dom_sf"/>
</dbReference>
<dbReference type="InterPro" id="IPR048318">
    <property type="entry name" value="ATG5_UblB"/>
</dbReference>
<dbReference type="PANTHER" id="PTHR13040">
    <property type="entry name" value="AUTOPHAGY PROTEIN 5"/>
    <property type="match status" value="1"/>
</dbReference>
<dbReference type="PANTHER" id="PTHR13040:SF2">
    <property type="entry name" value="AUTOPHAGY PROTEIN 5"/>
    <property type="match status" value="1"/>
</dbReference>
<dbReference type="Pfam" id="PF20637">
    <property type="entry name" value="ATG5_HBR"/>
    <property type="match status" value="1"/>
</dbReference>
<dbReference type="Pfam" id="PF20638">
    <property type="entry name" value="ATG5_UblA"/>
    <property type="match status" value="1"/>
</dbReference>
<dbReference type="Pfam" id="PF04106">
    <property type="entry name" value="ATG5_UblB"/>
    <property type="match status" value="1"/>
</dbReference>
<reference key="1">
    <citation type="journal article" date="2007" name="Nat. Biotechnol.">
        <title>Genome sequence of the lignocellulose-bioconverting and xylose-fermenting yeast Pichia stipitis.</title>
        <authorList>
            <person name="Jeffries T.W."/>
            <person name="Grigoriev I.V."/>
            <person name="Grimwood J."/>
            <person name="Laplaza J.M."/>
            <person name="Aerts A."/>
            <person name="Salamov A."/>
            <person name="Schmutz J."/>
            <person name="Lindquist E."/>
            <person name="Dehal P."/>
            <person name="Shapiro H."/>
            <person name="Jin Y.-S."/>
            <person name="Passoth V."/>
            <person name="Richardson P.M."/>
        </authorList>
    </citation>
    <scope>NUCLEOTIDE SEQUENCE [LARGE SCALE GENOMIC DNA]</scope>
    <source>
        <strain>ATCC 58785 / CBS 6054 / NBRC 10063 / NRRL Y-11545</strain>
    </source>
</reference>
<gene>
    <name type="primary">ATG5</name>
    <name type="ORF">PICST_35437</name>
</gene>
<organism>
    <name type="scientific">Scheffersomyces stipitis (strain ATCC 58785 / CBS 6054 / NBRC 10063 / NRRL Y-11545)</name>
    <name type="common">Yeast</name>
    <name type="synonym">Pichia stipitis</name>
    <dbReference type="NCBI Taxonomy" id="322104"/>
    <lineage>
        <taxon>Eukaryota</taxon>
        <taxon>Fungi</taxon>
        <taxon>Dikarya</taxon>
        <taxon>Ascomycota</taxon>
        <taxon>Saccharomycotina</taxon>
        <taxon>Pichiomycetes</taxon>
        <taxon>Debaryomycetaceae</taxon>
        <taxon>Scheffersomyces</taxon>
    </lineage>
</organism>
<feature type="chain" id="PRO_0000317861" description="Autophagy protein 5">
    <location>
        <begin position="1"/>
        <end position="282"/>
    </location>
</feature>
<feature type="cross-link" description="Glycyl lysine isopeptide (Lys-Gly) (interchain with G-Cter in ATG12)" evidence="1">
    <location>
        <position position="144"/>
    </location>
</feature>
<keyword id="KW-0072">Autophagy</keyword>
<keyword id="KW-1017">Isopeptide bond</keyword>
<keyword id="KW-0472">Membrane</keyword>
<keyword id="KW-0653">Protein transport</keyword>
<keyword id="KW-1185">Reference proteome</keyword>
<keyword id="KW-0813">Transport</keyword>
<keyword id="KW-0832">Ubl conjugation</keyword>
<proteinExistence type="inferred from homology"/>
<accession>A3LR68</accession>
<evidence type="ECO:0000250" key="1"/>
<evidence type="ECO:0000305" key="2"/>
<sequence>MADSDIIEIKAKLWNGHINLRVVLAYKDQKVEYLCTIYRNSYITLKLPAIVEYFSAFVQGLSSKQLWFEYEGVPIKWNLPVGLLYDYLHLPSLLGNFESSSSWTVYLRYDDYPSDYIIPFIYKKDDGTVDFDRSLKEVIVNQLKQSCFVLNGNSKPIMSLSEANSIQLWVSIVDHNLSAYTSINKKIVPKDKAQKIPVRIFIPGTTTIVQAPIYPYGEEEPTSMRDVLSLHLPHLFAEREAIALPYIHGIDTQSLLDEPLLKTWEIFKHLDNFLYVVVIPRV</sequence>